<sequence length="171" mass="18960">MNEEKEESPSTEAEGAGAEVVNWEERAETYRNDYLRALADIENLRKRHEKQVEDARNYAVDRFARELLPVVDSLELALASPVEGAESIALLRQGLENTLTLFAKALGKAGIAPIEMGEGRFDPHLHQAIAMVETEGEANRVLAVHQKGYVMHDRLLRPSMVSVSKAPKAAQ</sequence>
<comment type="function">
    <text evidence="1">Participates actively in the response to hyperosmotic and heat shock by preventing the aggregation of stress-denatured proteins, in association with DnaK and GrpE. It is the nucleotide exchange factor for DnaK and may function as a thermosensor. Unfolded proteins bind initially to DnaJ; upon interaction with the DnaJ-bound protein, DnaK hydrolyzes its bound ATP, resulting in the formation of a stable complex. GrpE releases ADP from DnaK; ATP binding to DnaK triggers the release of the substrate protein, thus completing the reaction cycle. Several rounds of ATP-dependent interactions between DnaJ, DnaK and GrpE are required for fully efficient folding.</text>
</comment>
<comment type="subunit">
    <text evidence="1">Homodimer.</text>
</comment>
<comment type="subcellular location">
    <subcellularLocation>
        <location evidence="1">Cytoplasm</location>
    </subcellularLocation>
</comment>
<comment type="similarity">
    <text evidence="1">Belongs to the GrpE family.</text>
</comment>
<name>GRPE_ACIF2</name>
<dbReference type="EMBL" id="CP001219">
    <property type="protein sequence ID" value="ACK80271.1"/>
    <property type="molecule type" value="Genomic_DNA"/>
</dbReference>
<dbReference type="RefSeq" id="WP_009563302.1">
    <property type="nucleotide sequence ID" value="NC_011761.1"/>
</dbReference>
<dbReference type="SMR" id="B7J7Y0"/>
<dbReference type="STRING" id="243159.AFE_2666"/>
<dbReference type="PaxDb" id="243159-AFE_2666"/>
<dbReference type="GeneID" id="65281711"/>
<dbReference type="KEGG" id="afr:AFE_2666"/>
<dbReference type="eggNOG" id="COG0576">
    <property type="taxonomic scope" value="Bacteria"/>
</dbReference>
<dbReference type="HOGENOM" id="CLU_057217_6_0_6"/>
<dbReference type="Proteomes" id="UP000001362">
    <property type="component" value="Chromosome"/>
</dbReference>
<dbReference type="GO" id="GO:0005829">
    <property type="term" value="C:cytosol"/>
    <property type="evidence" value="ECO:0007669"/>
    <property type="project" value="TreeGrafter"/>
</dbReference>
<dbReference type="GO" id="GO:0000774">
    <property type="term" value="F:adenyl-nucleotide exchange factor activity"/>
    <property type="evidence" value="ECO:0007669"/>
    <property type="project" value="InterPro"/>
</dbReference>
<dbReference type="GO" id="GO:0042803">
    <property type="term" value="F:protein homodimerization activity"/>
    <property type="evidence" value="ECO:0007669"/>
    <property type="project" value="InterPro"/>
</dbReference>
<dbReference type="GO" id="GO:0051087">
    <property type="term" value="F:protein-folding chaperone binding"/>
    <property type="evidence" value="ECO:0007669"/>
    <property type="project" value="InterPro"/>
</dbReference>
<dbReference type="GO" id="GO:0051082">
    <property type="term" value="F:unfolded protein binding"/>
    <property type="evidence" value="ECO:0007669"/>
    <property type="project" value="TreeGrafter"/>
</dbReference>
<dbReference type="GO" id="GO:0006457">
    <property type="term" value="P:protein folding"/>
    <property type="evidence" value="ECO:0007669"/>
    <property type="project" value="InterPro"/>
</dbReference>
<dbReference type="CDD" id="cd00446">
    <property type="entry name" value="GrpE"/>
    <property type="match status" value="1"/>
</dbReference>
<dbReference type="FunFam" id="2.30.22.10:FF:000001">
    <property type="entry name" value="Protein GrpE"/>
    <property type="match status" value="1"/>
</dbReference>
<dbReference type="Gene3D" id="3.90.20.20">
    <property type="match status" value="1"/>
</dbReference>
<dbReference type="Gene3D" id="2.30.22.10">
    <property type="entry name" value="Head domain of nucleotide exchange factor GrpE"/>
    <property type="match status" value="1"/>
</dbReference>
<dbReference type="HAMAP" id="MF_01151">
    <property type="entry name" value="GrpE"/>
    <property type="match status" value="1"/>
</dbReference>
<dbReference type="InterPro" id="IPR000740">
    <property type="entry name" value="GrpE"/>
</dbReference>
<dbReference type="InterPro" id="IPR013805">
    <property type="entry name" value="GrpE_coiled_coil"/>
</dbReference>
<dbReference type="InterPro" id="IPR009012">
    <property type="entry name" value="GrpE_head"/>
</dbReference>
<dbReference type="PANTHER" id="PTHR21237">
    <property type="entry name" value="GRPE PROTEIN"/>
    <property type="match status" value="1"/>
</dbReference>
<dbReference type="PANTHER" id="PTHR21237:SF23">
    <property type="entry name" value="GRPE PROTEIN HOMOLOG, MITOCHONDRIAL"/>
    <property type="match status" value="1"/>
</dbReference>
<dbReference type="Pfam" id="PF01025">
    <property type="entry name" value="GrpE"/>
    <property type="match status" value="1"/>
</dbReference>
<dbReference type="PRINTS" id="PR00773">
    <property type="entry name" value="GRPEPROTEIN"/>
</dbReference>
<dbReference type="SUPFAM" id="SSF58014">
    <property type="entry name" value="Coiled-coil domain of nucleotide exchange factor GrpE"/>
    <property type="match status" value="1"/>
</dbReference>
<dbReference type="SUPFAM" id="SSF51064">
    <property type="entry name" value="Head domain of nucleotide exchange factor GrpE"/>
    <property type="match status" value="1"/>
</dbReference>
<dbReference type="PROSITE" id="PS01071">
    <property type="entry name" value="GRPE"/>
    <property type="match status" value="1"/>
</dbReference>
<organism>
    <name type="scientific">Acidithiobacillus ferrooxidans (strain ATCC 23270 / DSM 14882 / CIP 104768 / NCIMB 8455)</name>
    <name type="common">Ferrobacillus ferrooxidans (strain ATCC 23270)</name>
    <dbReference type="NCBI Taxonomy" id="243159"/>
    <lineage>
        <taxon>Bacteria</taxon>
        <taxon>Pseudomonadati</taxon>
        <taxon>Pseudomonadota</taxon>
        <taxon>Acidithiobacillia</taxon>
        <taxon>Acidithiobacillales</taxon>
        <taxon>Acidithiobacillaceae</taxon>
        <taxon>Acidithiobacillus</taxon>
    </lineage>
</organism>
<protein>
    <recommendedName>
        <fullName evidence="1">Protein GrpE</fullName>
    </recommendedName>
    <alternativeName>
        <fullName evidence="1">HSP-70 cofactor</fullName>
    </alternativeName>
</protein>
<accession>B7J7Y0</accession>
<evidence type="ECO:0000255" key="1">
    <source>
        <dbReference type="HAMAP-Rule" id="MF_01151"/>
    </source>
</evidence>
<evidence type="ECO:0000256" key="2">
    <source>
        <dbReference type="SAM" id="MobiDB-lite"/>
    </source>
</evidence>
<keyword id="KW-0143">Chaperone</keyword>
<keyword id="KW-0963">Cytoplasm</keyword>
<keyword id="KW-1185">Reference proteome</keyword>
<keyword id="KW-0346">Stress response</keyword>
<feature type="chain" id="PRO_1000137527" description="Protein GrpE">
    <location>
        <begin position="1"/>
        <end position="171"/>
    </location>
</feature>
<feature type="region of interest" description="Disordered" evidence="2">
    <location>
        <begin position="1"/>
        <end position="20"/>
    </location>
</feature>
<gene>
    <name evidence="1" type="primary">grpE</name>
    <name type="ordered locus">AFE_2666</name>
</gene>
<proteinExistence type="inferred from homology"/>
<reference key="1">
    <citation type="journal article" date="2008" name="BMC Genomics">
        <title>Acidithiobacillus ferrooxidans metabolism: from genome sequence to industrial applications.</title>
        <authorList>
            <person name="Valdes J."/>
            <person name="Pedroso I."/>
            <person name="Quatrini R."/>
            <person name="Dodson R.J."/>
            <person name="Tettelin H."/>
            <person name="Blake R. II"/>
            <person name="Eisen J.A."/>
            <person name="Holmes D.S."/>
        </authorList>
    </citation>
    <scope>NUCLEOTIDE SEQUENCE [LARGE SCALE GENOMIC DNA]</scope>
    <source>
        <strain>ATCC 23270 / DSM 14882 / CIP 104768 / NCIMB 8455</strain>
    </source>
</reference>